<evidence type="ECO:0000255" key="1">
    <source>
        <dbReference type="HAMAP-Rule" id="MF_01014"/>
    </source>
</evidence>
<feature type="chain" id="PRO_0000290545" description="1-(5-phosphoribosyl)-5-[(5-phosphoribosylamino)methylideneamino] imidazole-4-carboxamide isomerase">
    <location>
        <begin position="1"/>
        <end position="246"/>
    </location>
</feature>
<feature type="active site" description="Proton acceptor" evidence="1">
    <location>
        <position position="7"/>
    </location>
</feature>
<feature type="active site" description="Proton donor" evidence="1">
    <location>
        <position position="130"/>
    </location>
</feature>
<reference key="1">
    <citation type="journal article" date="2006" name="Genome Res.">
        <title>Massive genome erosion and functional adaptations provide insights into the symbiotic lifestyle of Sodalis glossinidius in the tsetse host.</title>
        <authorList>
            <person name="Toh H."/>
            <person name="Weiss B.L."/>
            <person name="Perkin S.A.H."/>
            <person name="Yamashita A."/>
            <person name="Oshima K."/>
            <person name="Hattori M."/>
            <person name="Aksoy S."/>
        </authorList>
    </citation>
    <scope>NUCLEOTIDE SEQUENCE [LARGE SCALE GENOMIC DNA]</scope>
    <source>
        <strain>morsitans</strain>
    </source>
</reference>
<organism>
    <name type="scientific">Sodalis glossinidius (strain morsitans)</name>
    <dbReference type="NCBI Taxonomy" id="343509"/>
    <lineage>
        <taxon>Bacteria</taxon>
        <taxon>Pseudomonadati</taxon>
        <taxon>Pseudomonadota</taxon>
        <taxon>Gammaproteobacteria</taxon>
        <taxon>Enterobacterales</taxon>
        <taxon>Bruguierivoracaceae</taxon>
        <taxon>Sodalis</taxon>
    </lineage>
</organism>
<name>HIS4_SODGM</name>
<sequence>MIIPALDLIDGAVVRLHQGDYQTQCHYGADPLPRLQDYLRQGAEVLHLVDLTGARDPQTRQIPLLRRLLAGVAPALVQVGGGIRSAADVEVLLEAGATRVVVGSTAVLQPQEVQRWFERFGPDALVLALDVRIDDDGQRRVAISGWQEDSGATLEQVITQYRPLGLKHVLCTDISRDGTLTGSNVSLYRSLCDAWSDIAFQSSGGIGSLADIAQLRHSGVQGVIVGRSLLENKFTVAEALACWQNA</sequence>
<accession>Q2NTX5</accession>
<gene>
    <name evidence="1" type="primary">hisA</name>
    <name type="ordered locus">SG1125</name>
</gene>
<protein>
    <recommendedName>
        <fullName evidence="1">1-(5-phosphoribosyl)-5-[(5-phosphoribosylamino)methylideneamino] imidazole-4-carboxamide isomerase</fullName>
        <ecNumber evidence="1">5.3.1.16</ecNumber>
    </recommendedName>
    <alternativeName>
        <fullName evidence="1">Phosphoribosylformimino-5-aminoimidazole carboxamide ribotide isomerase</fullName>
    </alternativeName>
</protein>
<proteinExistence type="inferred from homology"/>
<dbReference type="EC" id="5.3.1.16" evidence="1"/>
<dbReference type="EMBL" id="AP008232">
    <property type="protein sequence ID" value="BAE74400.1"/>
    <property type="molecule type" value="Genomic_DNA"/>
</dbReference>
<dbReference type="RefSeq" id="WP_011410960.1">
    <property type="nucleotide sequence ID" value="NC_007712.1"/>
</dbReference>
<dbReference type="SMR" id="Q2NTX5"/>
<dbReference type="STRING" id="343509.SG1125"/>
<dbReference type="KEGG" id="sgl:SG1125"/>
<dbReference type="eggNOG" id="COG0106">
    <property type="taxonomic scope" value="Bacteria"/>
</dbReference>
<dbReference type="HOGENOM" id="CLU_048577_1_2_6"/>
<dbReference type="OrthoDB" id="9807749at2"/>
<dbReference type="BioCyc" id="SGLO343509:SGP1_RS09650-MONOMER"/>
<dbReference type="UniPathway" id="UPA00031">
    <property type="reaction ID" value="UER00009"/>
</dbReference>
<dbReference type="Proteomes" id="UP000001932">
    <property type="component" value="Chromosome"/>
</dbReference>
<dbReference type="GO" id="GO:0005737">
    <property type="term" value="C:cytoplasm"/>
    <property type="evidence" value="ECO:0007669"/>
    <property type="project" value="UniProtKB-SubCell"/>
</dbReference>
<dbReference type="GO" id="GO:0003949">
    <property type="term" value="F:1-(5-phosphoribosyl)-5-[(5-phosphoribosylamino)methylideneamino]imidazole-4-carboxamide isomerase activity"/>
    <property type="evidence" value="ECO:0007669"/>
    <property type="project" value="UniProtKB-UniRule"/>
</dbReference>
<dbReference type="GO" id="GO:0000105">
    <property type="term" value="P:L-histidine biosynthetic process"/>
    <property type="evidence" value="ECO:0007669"/>
    <property type="project" value="UniProtKB-UniRule"/>
</dbReference>
<dbReference type="GO" id="GO:0000162">
    <property type="term" value="P:L-tryptophan biosynthetic process"/>
    <property type="evidence" value="ECO:0007669"/>
    <property type="project" value="TreeGrafter"/>
</dbReference>
<dbReference type="CDD" id="cd04732">
    <property type="entry name" value="HisA"/>
    <property type="match status" value="1"/>
</dbReference>
<dbReference type="FunFam" id="3.20.20.70:FF:000009">
    <property type="entry name" value="1-(5-phosphoribosyl)-5-[(5-phosphoribosylamino)methylideneamino] imidazole-4-carboxamide isomerase"/>
    <property type="match status" value="1"/>
</dbReference>
<dbReference type="Gene3D" id="3.20.20.70">
    <property type="entry name" value="Aldolase class I"/>
    <property type="match status" value="1"/>
</dbReference>
<dbReference type="HAMAP" id="MF_01014">
    <property type="entry name" value="HisA"/>
    <property type="match status" value="1"/>
</dbReference>
<dbReference type="InterPro" id="IPR013785">
    <property type="entry name" value="Aldolase_TIM"/>
</dbReference>
<dbReference type="InterPro" id="IPR006062">
    <property type="entry name" value="His_biosynth"/>
</dbReference>
<dbReference type="InterPro" id="IPR006063">
    <property type="entry name" value="HisA_bact_arch"/>
</dbReference>
<dbReference type="InterPro" id="IPR044524">
    <property type="entry name" value="Isoase_HisA-like"/>
</dbReference>
<dbReference type="InterPro" id="IPR023016">
    <property type="entry name" value="Isoase_HisA-like_bact"/>
</dbReference>
<dbReference type="InterPro" id="IPR011060">
    <property type="entry name" value="RibuloseP-bd_barrel"/>
</dbReference>
<dbReference type="NCBIfam" id="TIGR00007">
    <property type="entry name" value="1-(5-phosphoribosyl)-5-[(5-phosphoribosylamino)methylideneamino]imidazole-4-carboxamide isomerase"/>
    <property type="match status" value="1"/>
</dbReference>
<dbReference type="PANTHER" id="PTHR43090">
    <property type="entry name" value="1-(5-PHOSPHORIBOSYL)-5-[(5-PHOSPHORIBOSYLAMINO)METHYLIDENEAMINO] IMIDAZOLE-4-CARBOXAMIDE ISOMERASE"/>
    <property type="match status" value="1"/>
</dbReference>
<dbReference type="PANTHER" id="PTHR43090:SF2">
    <property type="entry name" value="1-(5-PHOSPHORIBOSYL)-5-[(5-PHOSPHORIBOSYLAMINO)METHYLIDENEAMINO] IMIDAZOLE-4-CARBOXAMIDE ISOMERASE"/>
    <property type="match status" value="1"/>
</dbReference>
<dbReference type="Pfam" id="PF00977">
    <property type="entry name" value="His_biosynth"/>
    <property type="match status" value="1"/>
</dbReference>
<dbReference type="SUPFAM" id="SSF51366">
    <property type="entry name" value="Ribulose-phoshate binding barrel"/>
    <property type="match status" value="1"/>
</dbReference>
<comment type="catalytic activity">
    <reaction evidence="1">
        <text>1-(5-phospho-beta-D-ribosyl)-5-[(5-phospho-beta-D-ribosylamino)methylideneamino]imidazole-4-carboxamide = 5-[(5-phospho-1-deoxy-D-ribulos-1-ylimino)methylamino]-1-(5-phospho-beta-D-ribosyl)imidazole-4-carboxamide</text>
        <dbReference type="Rhea" id="RHEA:15469"/>
        <dbReference type="ChEBI" id="CHEBI:58435"/>
        <dbReference type="ChEBI" id="CHEBI:58525"/>
        <dbReference type="EC" id="5.3.1.16"/>
    </reaction>
</comment>
<comment type="pathway">
    <text evidence="1">Amino-acid biosynthesis; L-histidine biosynthesis; L-histidine from 5-phospho-alpha-D-ribose 1-diphosphate: step 4/9.</text>
</comment>
<comment type="subcellular location">
    <subcellularLocation>
        <location evidence="1">Cytoplasm</location>
    </subcellularLocation>
</comment>
<comment type="similarity">
    <text evidence="1">Belongs to the HisA/HisF family.</text>
</comment>
<keyword id="KW-0028">Amino-acid biosynthesis</keyword>
<keyword id="KW-0963">Cytoplasm</keyword>
<keyword id="KW-0368">Histidine biosynthesis</keyword>
<keyword id="KW-0413">Isomerase</keyword>